<feature type="chain" id="PRO_0000200590" description="Lysine-specific demethylase 5D">
    <location>
        <begin position="1"/>
        <end position="1535"/>
    </location>
</feature>
<feature type="domain" description="JmjN" evidence="6">
    <location>
        <begin position="14"/>
        <end position="55"/>
    </location>
</feature>
<feature type="domain" description="ARID" evidence="5">
    <location>
        <begin position="79"/>
        <end position="169"/>
    </location>
</feature>
<feature type="domain" description="JmjC" evidence="7">
    <location>
        <begin position="458"/>
        <end position="624"/>
    </location>
</feature>
<feature type="zinc finger region" description="PHD-type 1" evidence="4">
    <location>
        <begin position="314"/>
        <end position="364"/>
    </location>
</feature>
<feature type="zinc finger region" description="C5HC2" evidence="1">
    <location>
        <begin position="697"/>
        <end position="749"/>
    </location>
</feature>
<feature type="zinc finger region" description="PHD-type 2" evidence="4">
    <location>
        <begin position="1174"/>
        <end position="1235"/>
    </location>
</feature>
<feature type="region of interest" description="Disordered" evidence="8">
    <location>
        <begin position="192"/>
        <end position="227"/>
    </location>
</feature>
<feature type="region of interest" description="Disordered" evidence="8">
    <location>
        <begin position="1425"/>
        <end position="1519"/>
    </location>
</feature>
<feature type="compositionally biased region" description="Polar residues" evidence="8">
    <location>
        <begin position="197"/>
        <end position="210"/>
    </location>
</feature>
<feature type="compositionally biased region" description="Basic residues" evidence="8">
    <location>
        <begin position="1428"/>
        <end position="1441"/>
    </location>
</feature>
<feature type="compositionally biased region" description="Basic and acidic residues" evidence="8">
    <location>
        <begin position="1473"/>
        <end position="1487"/>
    </location>
</feature>
<feature type="compositionally biased region" description="Polar residues" evidence="8">
    <location>
        <begin position="1490"/>
        <end position="1517"/>
    </location>
</feature>
<feature type="binding site" evidence="1">
    <location>
        <position position="430"/>
    </location>
    <ligand>
        <name>2-oxoglutarate</name>
        <dbReference type="ChEBI" id="CHEBI:16810"/>
    </ligand>
</feature>
<feature type="binding site" evidence="7">
    <location>
        <position position="504"/>
    </location>
    <ligand>
        <name>Fe cation</name>
        <dbReference type="ChEBI" id="CHEBI:24875"/>
        <note>catalytic</note>
    </ligand>
</feature>
<feature type="binding site" evidence="1">
    <location>
        <position position="506"/>
    </location>
    <ligand>
        <name>Fe cation</name>
        <dbReference type="ChEBI" id="CHEBI:24875"/>
        <note>catalytic</note>
    </ligand>
</feature>
<feature type="binding site" evidence="1">
    <location>
        <position position="512"/>
    </location>
    <ligand>
        <name>2-oxoglutarate</name>
        <dbReference type="ChEBI" id="CHEBI:16810"/>
    </ligand>
</feature>
<feature type="binding site" evidence="1">
    <location>
        <position position="514"/>
    </location>
    <ligand>
        <name>2-oxoglutarate</name>
        <dbReference type="ChEBI" id="CHEBI:16810"/>
    </ligand>
</feature>
<feature type="binding site" evidence="1">
    <location>
        <position position="522"/>
    </location>
    <ligand>
        <name>2-oxoglutarate</name>
        <dbReference type="ChEBI" id="CHEBI:16810"/>
    </ligand>
</feature>
<feature type="binding site" evidence="7">
    <location>
        <position position="592"/>
    </location>
    <ligand>
        <name>Fe cation</name>
        <dbReference type="ChEBI" id="CHEBI:24875"/>
        <note>catalytic</note>
    </ligand>
</feature>
<feature type="modified residue" description="Phosphoserine" evidence="2">
    <location>
        <position position="291"/>
    </location>
</feature>
<feature type="modified residue" description="Phosphoserine" evidence="2">
    <location>
        <position position="307"/>
    </location>
</feature>
<feature type="modified residue" description="Phosphoserine" evidence="2">
    <location>
        <position position="884"/>
    </location>
</feature>
<feature type="modified residue" description="Phosphoserine" evidence="2">
    <location>
        <position position="1342"/>
    </location>
</feature>
<feature type="cross-link" description="Glycyl lysine isopeptide (Lys-Gly) (interchain with G-Cter in SUMO2)" evidence="2">
    <location>
        <position position="205"/>
    </location>
</feature>
<feature type="cross-link" description="Glycyl lysine isopeptide (Lys-Gly) (interchain with G-Cter in SUMO2)" evidence="2">
    <location>
        <position position="229"/>
    </location>
</feature>
<feature type="cross-link" description="Glycyl lysine isopeptide (Lys-Gly) (interchain with G-Cter in SUMO2)" evidence="2">
    <location>
        <position position="244"/>
    </location>
</feature>
<feature type="cross-link" description="Glycyl lysine isopeptide (Lys-Gly) (interchain with G-Cter in SUMO2)" evidence="2">
    <location>
        <position position="272"/>
    </location>
</feature>
<reference key="1">
    <citation type="submission" date="2004-07" db="EMBL/GenBank/DDBJ databases">
        <title>The DNA sequence of the chimpanzee Y chromosome.</title>
        <authorList>
            <person name="Hughes J.F."/>
            <person name="Pyntikova T."/>
            <person name="Skaletsky H."/>
            <person name="Minx P.J."/>
            <person name="Rozen S."/>
            <person name="Wilson R.K."/>
            <person name="Page D.C."/>
        </authorList>
    </citation>
    <scope>NUCLEOTIDE SEQUENCE [LARGE SCALE GENOMIC DNA]</scope>
</reference>
<evidence type="ECO:0000250" key="1">
    <source>
        <dbReference type="UniProtKB" id="P29375"/>
    </source>
</evidence>
<evidence type="ECO:0000250" key="2">
    <source>
        <dbReference type="UniProtKB" id="P41229"/>
    </source>
</evidence>
<evidence type="ECO:0000250" key="3">
    <source>
        <dbReference type="UniProtKB" id="Q9BY66"/>
    </source>
</evidence>
<evidence type="ECO:0000255" key="4">
    <source>
        <dbReference type="PROSITE-ProRule" id="PRU00146"/>
    </source>
</evidence>
<evidence type="ECO:0000255" key="5">
    <source>
        <dbReference type="PROSITE-ProRule" id="PRU00355"/>
    </source>
</evidence>
<evidence type="ECO:0000255" key="6">
    <source>
        <dbReference type="PROSITE-ProRule" id="PRU00537"/>
    </source>
</evidence>
<evidence type="ECO:0000255" key="7">
    <source>
        <dbReference type="PROSITE-ProRule" id="PRU00538"/>
    </source>
</evidence>
<evidence type="ECO:0000256" key="8">
    <source>
        <dbReference type="SAM" id="MobiDB-lite"/>
    </source>
</evidence>
<evidence type="ECO:0000305" key="9"/>
<gene>
    <name type="primary">KDM5D</name>
    <name type="synonym">JARID1D</name>
    <name type="synonym">SMCY</name>
</gene>
<organism>
    <name type="scientific">Pan troglodytes</name>
    <name type="common">Chimpanzee</name>
    <dbReference type="NCBI Taxonomy" id="9598"/>
    <lineage>
        <taxon>Eukaryota</taxon>
        <taxon>Metazoa</taxon>
        <taxon>Chordata</taxon>
        <taxon>Craniata</taxon>
        <taxon>Vertebrata</taxon>
        <taxon>Euteleostomi</taxon>
        <taxon>Mammalia</taxon>
        <taxon>Eutheria</taxon>
        <taxon>Euarchontoglires</taxon>
        <taxon>Primates</taxon>
        <taxon>Haplorrhini</taxon>
        <taxon>Catarrhini</taxon>
        <taxon>Hominidae</taxon>
        <taxon>Pan</taxon>
    </lineage>
</organism>
<name>KDM5D_PANTR</name>
<dbReference type="EC" id="1.14.11.67" evidence="3"/>
<dbReference type="EMBL" id="AY736376">
    <property type="protein sequence ID" value="AAU82116.1"/>
    <property type="molecule type" value="mRNA"/>
</dbReference>
<dbReference type="RefSeq" id="NP_001008975.1">
    <property type="nucleotide sequence ID" value="NM_001008975.1"/>
</dbReference>
<dbReference type="BMRB" id="Q5XUN4"/>
<dbReference type="SMR" id="Q5XUN4"/>
<dbReference type="FunCoup" id="Q5XUN4">
    <property type="interactions" value="871"/>
</dbReference>
<dbReference type="STRING" id="9598.ENSPTRP00000082881"/>
<dbReference type="PaxDb" id="9598-ENSPTRP00000038793"/>
<dbReference type="GeneID" id="449032"/>
<dbReference type="KEGG" id="ptr:449032"/>
<dbReference type="CTD" id="8284"/>
<dbReference type="eggNOG" id="KOG1246">
    <property type="taxonomic scope" value="Eukaryota"/>
</dbReference>
<dbReference type="InParanoid" id="Q5XUN4"/>
<dbReference type="Proteomes" id="UP000002277">
    <property type="component" value="Unplaced"/>
</dbReference>
<dbReference type="GO" id="GO:0000785">
    <property type="term" value="C:chromatin"/>
    <property type="evidence" value="ECO:0000318"/>
    <property type="project" value="GO_Central"/>
</dbReference>
<dbReference type="GO" id="GO:0005634">
    <property type="term" value="C:nucleus"/>
    <property type="evidence" value="ECO:0000318"/>
    <property type="project" value="GO_Central"/>
</dbReference>
<dbReference type="GO" id="GO:0003677">
    <property type="term" value="F:DNA binding"/>
    <property type="evidence" value="ECO:0007669"/>
    <property type="project" value="InterPro"/>
</dbReference>
<dbReference type="GO" id="GO:0034647">
    <property type="term" value="F:histone H3K4me/H3K4me2/H3K4me3 demethylase activity"/>
    <property type="evidence" value="ECO:0000318"/>
    <property type="project" value="GO_Central"/>
</dbReference>
<dbReference type="GO" id="GO:0008270">
    <property type="term" value="F:zinc ion binding"/>
    <property type="evidence" value="ECO:0007669"/>
    <property type="project" value="UniProtKB-KW"/>
</dbReference>
<dbReference type="GO" id="GO:0006338">
    <property type="term" value="P:chromatin remodeling"/>
    <property type="evidence" value="ECO:0000318"/>
    <property type="project" value="GO_Central"/>
</dbReference>
<dbReference type="GO" id="GO:0006355">
    <property type="term" value="P:regulation of DNA-templated transcription"/>
    <property type="evidence" value="ECO:0000318"/>
    <property type="project" value="GO_Central"/>
</dbReference>
<dbReference type="CDD" id="cd16875">
    <property type="entry name" value="ARID_KDM5C_5D"/>
    <property type="match status" value="1"/>
</dbReference>
<dbReference type="CDD" id="cd15604">
    <property type="entry name" value="PHD1_KDM5C_5D"/>
    <property type="match status" value="1"/>
</dbReference>
<dbReference type="CDD" id="cd15608">
    <property type="entry name" value="PHD2_KDM5C_5D"/>
    <property type="match status" value="1"/>
</dbReference>
<dbReference type="FunFam" id="3.30.40.10:FF:000072">
    <property type="entry name" value="lysine-specific demethylase 5C isoform X2"/>
    <property type="match status" value="1"/>
</dbReference>
<dbReference type="FunFam" id="3.30.40.10:FF:000651">
    <property type="entry name" value="Lysine-specific demethylase 5D"/>
    <property type="match status" value="1"/>
</dbReference>
<dbReference type="FunFam" id="1.10.150.60:FF:000001">
    <property type="entry name" value="Putative lysine-specific demethylase 5b"/>
    <property type="match status" value="1"/>
</dbReference>
<dbReference type="FunFam" id="2.60.120.650:FF:000001">
    <property type="entry name" value="Putative lysine-specific demethylase 5b"/>
    <property type="match status" value="1"/>
</dbReference>
<dbReference type="Gene3D" id="1.10.150.60">
    <property type="entry name" value="ARID DNA-binding domain"/>
    <property type="match status" value="1"/>
</dbReference>
<dbReference type="Gene3D" id="2.60.120.650">
    <property type="entry name" value="Cupin"/>
    <property type="match status" value="1"/>
</dbReference>
<dbReference type="Gene3D" id="3.30.40.10">
    <property type="entry name" value="Zinc/RING finger domain, C3HC4 (zinc finger)"/>
    <property type="match status" value="2"/>
</dbReference>
<dbReference type="InterPro" id="IPR001606">
    <property type="entry name" value="ARID_dom"/>
</dbReference>
<dbReference type="InterPro" id="IPR036431">
    <property type="entry name" value="ARID_dom_sf"/>
</dbReference>
<dbReference type="InterPro" id="IPR003347">
    <property type="entry name" value="JmjC_dom"/>
</dbReference>
<dbReference type="InterPro" id="IPR003349">
    <property type="entry name" value="JmjN"/>
</dbReference>
<dbReference type="InterPro" id="IPR048615">
    <property type="entry name" value="KDM5_C-hel"/>
</dbReference>
<dbReference type="InterPro" id="IPR013637">
    <property type="entry name" value="Lys_sp_deMease-like_dom"/>
</dbReference>
<dbReference type="InterPro" id="IPR019786">
    <property type="entry name" value="Zinc_finger_PHD-type_CS"/>
</dbReference>
<dbReference type="InterPro" id="IPR004198">
    <property type="entry name" value="Znf_C5HC2"/>
</dbReference>
<dbReference type="InterPro" id="IPR011011">
    <property type="entry name" value="Znf_FYVE_PHD"/>
</dbReference>
<dbReference type="InterPro" id="IPR001965">
    <property type="entry name" value="Znf_PHD"/>
</dbReference>
<dbReference type="InterPro" id="IPR019787">
    <property type="entry name" value="Znf_PHD-finger"/>
</dbReference>
<dbReference type="InterPro" id="IPR013083">
    <property type="entry name" value="Znf_RING/FYVE/PHD"/>
</dbReference>
<dbReference type="PANTHER" id="PTHR10694">
    <property type="entry name" value="LYSINE-SPECIFIC DEMETHYLASE"/>
    <property type="match status" value="1"/>
</dbReference>
<dbReference type="PANTHER" id="PTHR10694:SF84">
    <property type="entry name" value="LYSINE-SPECIFIC DEMETHYLASE 5D"/>
    <property type="match status" value="1"/>
</dbReference>
<dbReference type="Pfam" id="PF01388">
    <property type="entry name" value="ARID"/>
    <property type="match status" value="1"/>
</dbReference>
<dbReference type="Pfam" id="PF02373">
    <property type="entry name" value="JmjC"/>
    <property type="match status" value="1"/>
</dbReference>
<dbReference type="Pfam" id="PF02375">
    <property type="entry name" value="JmjN"/>
    <property type="match status" value="1"/>
</dbReference>
<dbReference type="Pfam" id="PF21323">
    <property type="entry name" value="KDM5_C-hel"/>
    <property type="match status" value="1"/>
</dbReference>
<dbReference type="Pfam" id="PF00628">
    <property type="entry name" value="PHD"/>
    <property type="match status" value="1"/>
</dbReference>
<dbReference type="Pfam" id="PF08429">
    <property type="entry name" value="PLU-1"/>
    <property type="match status" value="1"/>
</dbReference>
<dbReference type="Pfam" id="PF02928">
    <property type="entry name" value="zf-C5HC2"/>
    <property type="match status" value="1"/>
</dbReference>
<dbReference type="SMART" id="SM01014">
    <property type="entry name" value="ARID"/>
    <property type="match status" value="1"/>
</dbReference>
<dbReference type="SMART" id="SM00501">
    <property type="entry name" value="BRIGHT"/>
    <property type="match status" value="1"/>
</dbReference>
<dbReference type="SMART" id="SM00558">
    <property type="entry name" value="JmjC"/>
    <property type="match status" value="1"/>
</dbReference>
<dbReference type="SMART" id="SM00545">
    <property type="entry name" value="JmjN"/>
    <property type="match status" value="1"/>
</dbReference>
<dbReference type="SMART" id="SM00249">
    <property type="entry name" value="PHD"/>
    <property type="match status" value="2"/>
</dbReference>
<dbReference type="SUPFAM" id="SSF46774">
    <property type="entry name" value="ARID-like"/>
    <property type="match status" value="1"/>
</dbReference>
<dbReference type="SUPFAM" id="SSF51197">
    <property type="entry name" value="Clavaminate synthase-like"/>
    <property type="match status" value="1"/>
</dbReference>
<dbReference type="SUPFAM" id="SSF57903">
    <property type="entry name" value="FYVE/PHD zinc finger"/>
    <property type="match status" value="2"/>
</dbReference>
<dbReference type="PROSITE" id="PS51011">
    <property type="entry name" value="ARID"/>
    <property type="match status" value="1"/>
</dbReference>
<dbReference type="PROSITE" id="PS51184">
    <property type="entry name" value="JMJC"/>
    <property type="match status" value="1"/>
</dbReference>
<dbReference type="PROSITE" id="PS51183">
    <property type="entry name" value="JMJN"/>
    <property type="match status" value="1"/>
</dbReference>
<dbReference type="PROSITE" id="PS01359">
    <property type="entry name" value="ZF_PHD_1"/>
    <property type="match status" value="2"/>
</dbReference>
<dbReference type="PROSITE" id="PS50016">
    <property type="entry name" value="ZF_PHD_2"/>
    <property type="match status" value="1"/>
</dbReference>
<sequence>MEPGCNEFLPPPECPVFEPSWAEFQDPLGYIAKIRPIAEKSGICKIRPPADWQPPFAVEVDNFRFTPRIQRLNELEAQTRVKLNYLDQIAKFWEIQGSSLKIPNVERKILDLYSLSKIVIEEGGYEAICKDRRWARVAQRLHYPPGKNIGSLLRSHYERIIYPYEMFQSGANHVQCNTHPFDNEVKDKEYKPHSIPLRQSVQPSKFSSYSRRAKRLQPDPEPTEEDIEKNPELKKLQIYGPGPKMMGLGLMAKDKDKTVHKKVTCPPTVTVKDEQSGGGNVSSTLLKQHLSLEPCTKTTMQLRKNHSSAQFIDSYICQVCSRGDEDDKLLFCDGCDDNYHIFCLLPPLPEIPRGIWRCPKCILAECKQPPEAFGFEQATQEYTLQSFGEMADSFKSDYFNMPVHMVPTELLEKEFWRLVSSIEEDVTVEYGADIHYKEFGSGFPVSNSKQNLSPEEKEYATSGWNLNVMPVLAQSVLCHINADISGMKVPWLYVGMVFSAFCWHIEDHWSYSINYLHWGEPKTWYGVPSLAAEHLEEVMKMLTPELFDSQPDLLHQLVTLMNPNTLMSHGVPVVRTNQCAGEFVITFPRAYHSGFNQGYNFAEAVNFCTADWLPAGRQCIEHYRRLRRYCVFSHEELICKMAAFPETLDLNLAVAVHKEMFIMVQEERRLRKALLEKGVTEAEREAFELLPDDERQCIKCKTTCFLSALACYDCPDGLVCLSHINDLCKCSSSRQYLRYRYTLDELPTMLHKLKIRAESFDTWANKVRVALEVEDGRKRSFEELRALESEARERRFPNSELLQRLKNCLSEVEACIAQVLGLVSGQVARMDTPQLTLTELRVLLEQMGSLPCAMHQIGDVKDVLEQVEAYQDEAREALATLPSSPGLLRSLLERGQQLGVEVPEAHQLQQQVEQAQWLDEVKQALAPSAHRGSLVIMQGLLVMGAKIASSPSVDKARAELQELLTIAERWEEKAHFCLEARQKHPPATLEAIIRETENIPVHLPNIQALKEALTKAQAWIADVDEIQNGDHYPCLDDLEGLVAVGRDLPVGLEELRQLELQVLTAHSWREKASKTFLKKNSCYTLLEVLCPCADAGSDSTKRSRWMEKALGLYQCDTELLGLSAQDLRDPGSLIVAFKEGEQKEKEGILQLRRTNSAKPSPLAPSLMASSPTSICVCGQVPAGVGALQCDLCQDWFHGQCVSVPHLLTSPKPSLTSSPLLAWWEWDTKFLCPLCMRSRRPRLETILALLVALQRLPVRLPEGEALQCLTERAIGWQDRARKALASEDVTALLRHLAELRQQLQAKPRPVYTSATACDPIREGSGNNISKVQGLLENGDSVISPENMAPGKGSDLELLSSLLPQLTGPVLELPEAIRAPLEELMMEGDLLEVTLDENHSIWQLLQAGQPPDLDRIRTLLELEKFEHQGSRTRSRALERRRRQQKVDQGRNVENLVQQELQSKRARSSGIMSQVGREEEHYQEKADRENMFLTPSTDHSPSLKGNQNSLQHKDSGSSAACPSLMPWLQLSYSDEQQL</sequence>
<proteinExistence type="evidence at transcript level"/>
<keyword id="KW-0156">Chromatin regulator</keyword>
<keyword id="KW-0223">Dioxygenase</keyword>
<keyword id="KW-0408">Iron</keyword>
<keyword id="KW-1017">Isopeptide bond</keyword>
<keyword id="KW-0479">Metal-binding</keyword>
<keyword id="KW-0539">Nucleus</keyword>
<keyword id="KW-0560">Oxidoreductase</keyword>
<keyword id="KW-0597">Phosphoprotein</keyword>
<keyword id="KW-1185">Reference proteome</keyword>
<keyword id="KW-0677">Repeat</keyword>
<keyword id="KW-0832">Ubl conjugation</keyword>
<keyword id="KW-0862">Zinc</keyword>
<keyword id="KW-0863">Zinc-finger</keyword>
<protein>
    <recommendedName>
        <fullName>Lysine-specific demethylase 5D</fullName>
        <ecNumber evidence="3">1.14.11.67</ecNumber>
    </recommendedName>
    <alternativeName>
        <fullName>Histone demethylase JARID1D</fullName>
    </alternativeName>
    <alternativeName>
        <fullName>Jumonji/ARID domain-containing protein 1D</fullName>
    </alternativeName>
    <alternativeName>
        <fullName>Protein SmcY</fullName>
    </alternativeName>
    <alternativeName>
        <fullName evidence="9">[histone H3]-trimethyl-L-lysine(4) demethylase 5D</fullName>
    </alternativeName>
</protein>
<comment type="function">
    <text evidence="3">Histone demethylase that specifically demethylates 'Lys-4' of histone H3, thereby playing a central role in histone code. Does not demethylate histone H3 'Lys-9', H3 'Lys-27', H3 'Lys-36', H3 'Lys-79' or H4 'Lys-20'. Demethylates trimethylated and dimethylated but not monomethylated H3 'Lys-4'. May play a role in spermatogenesis. Involved in transcriptional repression of diverse metastasis-associated genes; in this function seems to cooperate with ZMYND8. Suppresses prostate cancer cell invasion. Regulates androgen receptor (AR) transcriptional activity by demethylating H3K4me3 active transcription marks (By similarity).</text>
</comment>
<comment type="catalytic activity">
    <reaction evidence="3">
        <text>N(6),N(6),N(6)-trimethyl-L-lysyl(4)-[histone H3] + 3 2-oxoglutarate + 3 O2 = L-lysyl(4)-[histone H3] + 3 formaldehyde + 3 succinate + 3 CO2</text>
        <dbReference type="Rhea" id="RHEA:60208"/>
        <dbReference type="Rhea" id="RHEA-COMP:15537"/>
        <dbReference type="Rhea" id="RHEA-COMP:15547"/>
        <dbReference type="ChEBI" id="CHEBI:15379"/>
        <dbReference type="ChEBI" id="CHEBI:16526"/>
        <dbReference type="ChEBI" id="CHEBI:16810"/>
        <dbReference type="ChEBI" id="CHEBI:16842"/>
        <dbReference type="ChEBI" id="CHEBI:29969"/>
        <dbReference type="ChEBI" id="CHEBI:30031"/>
        <dbReference type="ChEBI" id="CHEBI:61961"/>
        <dbReference type="EC" id="1.14.11.67"/>
    </reaction>
</comment>
<comment type="cofactor">
    <cofactor evidence="3">
        <name>L-ascorbate</name>
        <dbReference type="ChEBI" id="CHEBI:38290"/>
    </cofactor>
</comment>
<comment type="cofactor">
    <cofactor evidence="3">
        <name>Fe(2+)</name>
        <dbReference type="ChEBI" id="CHEBI:29033"/>
    </cofactor>
    <text evidence="3">Binds 1 Fe(2+) ion per subunit.</text>
</comment>
<comment type="subunit">
    <text evidence="3">Interacts withPCGF6, MSH5, ZMYND8, AR.</text>
</comment>
<comment type="subcellular location">
    <subcellularLocation>
        <location evidence="3 5 6">Nucleus</location>
    </subcellularLocation>
</comment>
<comment type="domain">
    <text evidence="3">The JmjC domain is required for enzymatic activity.</text>
</comment>
<comment type="similarity">
    <text evidence="9">Belongs to the JARID1 histone demethylase family.</text>
</comment>
<accession>Q5XUN4</accession>